<sequence>MSSRKSKSNSLIHTECLSQVQRILRERFCRQSPHSNLFGVQVQYKHLSELLKRTALHGESNSVLIIGPRGSGKTMLINHALKELMEIEEVSENVLQVHLNGLLQINDKIALKEITRQLNLENVVGDKVFGSFAENLSFLLEALKKGDRTSSCPVIFILDEFDLFAHHKNQTLLYNLFDISQSAQTPIAVIGLTCRLDILELLEKRVKSRFSHRQIHLMNSFGFPQYVKIFKEQLSLPAEFPDKVFAEKWNENVQYLSEDRSVQEVLQKHFNISKNLRSLHMLLMLALNRVTASHPFMTAVDLMEASQLCSMDSKANIVHGLSVLEICLIIAMKHLNDIYEEEPFNFQMVYNEFQKFVQRKAHSVYNFEKPVVMKAFEHLQQLELIKPMERTSGNSQREYQLMKLLLDNTQIMNALQKYPNCPTDVRQWATSSLSWL</sequence>
<reference key="1">
    <citation type="journal article" date="1997" name="J. Biol. Chem.">
        <title>Identification of HsORC4, a member of the human origin of replication recognition complex.</title>
        <authorList>
            <person name="Quintana D.G."/>
            <person name="Hou Z.H."/>
            <person name="Thome K.C."/>
            <person name="Hendricks M."/>
            <person name="Saha P."/>
            <person name="Dutta A."/>
        </authorList>
    </citation>
    <scope>NUCLEOTIDE SEQUENCE [MRNA] (ISOFORM 1)</scope>
    <scope>VARIANT SER-78</scope>
</reference>
<reference key="2">
    <citation type="submission" date="1998-02" db="EMBL/GenBank/DDBJ databases">
        <title>The Orc4p and Orc5p subunits of the Xenopus and human origin recognition complex are related to Orc1p and Cdc6p.</title>
        <authorList>
            <person name="Komrskova T."/>
            <person name="Yang H."/>
            <person name="Gavin K."/>
            <person name="Pappin D."/>
            <person name="Canas B."/>
            <person name="Kobayashi R."/>
            <person name="Hunt T."/>
            <person name="Stillman B."/>
        </authorList>
    </citation>
    <scope>NUCLEOTIDE SEQUENCE [MRNA] (ISOFORM 1)</scope>
    <scope>VARIANT SER-78</scope>
</reference>
<reference key="3">
    <citation type="submission" date="1999-03" db="EMBL/GenBank/DDBJ databases">
        <title>cDNA cloning of a homolog for S. cerevisiae ORC4 from H. sapiens.</title>
        <authorList>
            <person name="Dean F.B."/>
            <person name="O'Donnell M."/>
        </authorList>
    </citation>
    <scope>NUCLEOTIDE SEQUENCE [MRNA] (ISOFORM 1)</scope>
    <scope>VARIANT SER-78</scope>
</reference>
<reference key="4">
    <citation type="submission" date="2004-04" db="EMBL/GenBank/DDBJ databases">
        <authorList>
            <consortium name="NIEHS SNPs program"/>
        </authorList>
    </citation>
    <scope>NUCLEOTIDE SEQUENCE [GENOMIC DNA]</scope>
    <scope>VARIANT VAL-56</scope>
</reference>
<reference key="5">
    <citation type="journal article" date="2004" name="Nat. Genet.">
        <title>Complete sequencing and characterization of 21,243 full-length human cDNAs.</title>
        <authorList>
            <person name="Ota T."/>
            <person name="Suzuki Y."/>
            <person name="Nishikawa T."/>
            <person name="Otsuki T."/>
            <person name="Sugiyama T."/>
            <person name="Irie R."/>
            <person name="Wakamatsu A."/>
            <person name="Hayashi K."/>
            <person name="Sato H."/>
            <person name="Nagai K."/>
            <person name="Kimura K."/>
            <person name="Makita H."/>
            <person name="Sekine M."/>
            <person name="Obayashi M."/>
            <person name="Nishi T."/>
            <person name="Shibahara T."/>
            <person name="Tanaka T."/>
            <person name="Ishii S."/>
            <person name="Yamamoto J."/>
            <person name="Saito K."/>
            <person name="Kawai Y."/>
            <person name="Isono Y."/>
            <person name="Nakamura Y."/>
            <person name="Nagahari K."/>
            <person name="Murakami K."/>
            <person name="Yasuda T."/>
            <person name="Iwayanagi T."/>
            <person name="Wagatsuma M."/>
            <person name="Shiratori A."/>
            <person name="Sudo H."/>
            <person name="Hosoiri T."/>
            <person name="Kaku Y."/>
            <person name="Kodaira H."/>
            <person name="Kondo H."/>
            <person name="Sugawara M."/>
            <person name="Takahashi M."/>
            <person name="Kanda K."/>
            <person name="Yokoi T."/>
            <person name="Furuya T."/>
            <person name="Kikkawa E."/>
            <person name="Omura Y."/>
            <person name="Abe K."/>
            <person name="Kamihara K."/>
            <person name="Katsuta N."/>
            <person name="Sato K."/>
            <person name="Tanikawa M."/>
            <person name="Yamazaki M."/>
            <person name="Ninomiya K."/>
            <person name="Ishibashi T."/>
            <person name="Yamashita H."/>
            <person name="Murakawa K."/>
            <person name="Fujimori K."/>
            <person name="Tanai H."/>
            <person name="Kimata M."/>
            <person name="Watanabe M."/>
            <person name="Hiraoka S."/>
            <person name="Chiba Y."/>
            <person name="Ishida S."/>
            <person name="Ono Y."/>
            <person name="Takiguchi S."/>
            <person name="Watanabe S."/>
            <person name="Yosida M."/>
            <person name="Hotuta T."/>
            <person name="Kusano J."/>
            <person name="Kanehori K."/>
            <person name="Takahashi-Fujii A."/>
            <person name="Hara H."/>
            <person name="Tanase T.-O."/>
            <person name="Nomura Y."/>
            <person name="Togiya S."/>
            <person name="Komai F."/>
            <person name="Hara R."/>
            <person name="Takeuchi K."/>
            <person name="Arita M."/>
            <person name="Imose N."/>
            <person name="Musashino K."/>
            <person name="Yuuki H."/>
            <person name="Oshima A."/>
            <person name="Sasaki N."/>
            <person name="Aotsuka S."/>
            <person name="Yoshikawa Y."/>
            <person name="Matsunawa H."/>
            <person name="Ichihara T."/>
            <person name="Shiohata N."/>
            <person name="Sano S."/>
            <person name="Moriya S."/>
            <person name="Momiyama H."/>
            <person name="Satoh N."/>
            <person name="Takami S."/>
            <person name="Terashima Y."/>
            <person name="Suzuki O."/>
            <person name="Nakagawa S."/>
            <person name="Senoh A."/>
            <person name="Mizoguchi H."/>
            <person name="Goto Y."/>
            <person name="Shimizu F."/>
            <person name="Wakebe H."/>
            <person name="Hishigaki H."/>
            <person name="Watanabe T."/>
            <person name="Sugiyama A."/>
            <person name="Takemoto M."/>
            <person name="Kawakami B."/>
            <person name="Yamazaki M."/>
            <person name="Watanabe K."/>
            <person name="Kumagai A."/>
            <person name="Itakura S."/>
            <person name="Fukuzumi Y."/>
            <person name="Fujimori Y."/>
            <person name="Komiyama M."/>
            <person name="Tashiro H."/>
            <person name="Tanigami A."/>
            <person name="Fujiwara T."/>
            <person name="Ono T."/>
            <person name="Yamada K."/>
            <person name="Fujii Y."/>
            <person name="Ozaki K."/>
            <person name="Hirao M."/>
            <person name="Ohmori Y."/>
            <person name="Kawabata A."/>
            <person name="Hikiji T."/>
            <person name="Kobatake N."/>
            <person name="Inagaki H."/>
            <person name="Ikema Y."/>
            <person name="Okamoto S."/>
            <person name="Okitani R."/>
            <person name="Kawakami T."/>
            <person name="Noguchi S."/>
            <person name="Itoh T."/>
            <person name="Shigeta K."/>
            <person name="Senba T."/>
            <person name="Matsumura K."/>
            <person name="Nakajima Y."/>
            <person name="Mizuno T."/>
            <person name="Morinaga M."/>
            <person name="Sasaki M."/>
            <person name="Togashi T."/>
            <person name="Oyama M."/>
            <person name="Hata H."/>
            <person name="Watanabe M."/>
            <person name="Komatsu T."/>
            <person name="Mizushima-Sugano J."/>
            <person name="Satoh T."/>
            <person name="Shirai Y."/>
            <person name="Takahashi Y."/>
            <person name="Nakagawa K."/>
            <person name="Okumura K."/>
            <person name="Nagase T."/>
            <person name="Nomura N."/>
            <person name="Kikuchi H."/>
            <person name="Masuho Y."/>
            <person name="Yamashita R."/>
            <person name="Nakai K."/>
            <person name="Yada T."/>
            <person name="Nakamura Y."/>
            <person name="Ohara O."/>
            <person name="Isogai T."/>
            <person name="Sugano S."/>
        </authorList>
    </citation>
    <scope>NUCLEOTIDE SEQUENCE [LARGE SCALE MRNA] (ISOFORMS 2 AND 3)</scope>
    <source>
        <tissue>Hippocampus</tissue>
    </source>
</reference>
<reference key="6">
    <citation type="journal article" date="2005" name="Nature">
        <title>Generation and annotation of the DNA sequences of human chromosomes 2 and 4.</title>
        <authorList>
            <person name="Hillier L.W."/>
            <person name="Graves T.A."/>
            <person name="Fulton R.S."/>
            <person name="Fulton L.A."/>
            <person name="Pepin K.H."/>
            <person name="Minx P."/>
            <person name="Wagner-McPherson C."/>
            <person name="Layman D."/>
            <person name="Wylie K."/>
            <person name="Sekhon M."/>
            <person name="Becker M.C."/>
            <person name="Fewell G.A."/>
            <person name="Delehaunty K.D."/>
            <person name="Miner T.L."/>
            <person name="Nash W.E."/>
            <person name="Kremitzki C."/>
            <person name="Oddy L."/>
            <person name="Du H."/>
            <person name="Sun H."/>
            <person name="Bradshaw-Cordum H."/>
            <person name="Ali J."/>
            <person name="Carter J."/>
            <person name="Cordes M."/>
            <person name="Harris A."/>
            <person name="Isak A."/>
            <person name="van Brunt A."/>
            <person name="Nguyen C."/>
            <person name="Du F."/>
            <person name="Courtney L."/>
            <person name="Kalicki J."/>
            <person name="Ozersky P."/>
            <person name="Abbott S."/>
            <person name="Armstrong J."/>
            <person name="Belter E.A."/>
            <person name="Caruso L."/>
            <person name="Cedroni M."/>
            <person name="Cotton M."/>
            <person name="Davidson T."/>
            <person name="Desai A."/>
            <person name="Elliott G."/>
            <person name="Erb T."/>
            <person name="Fronick C."/>
            <person name="Gaige T."/>
            <person name="Haakenson W."/>
            <person name="Haglund K."/>
            <person name="Holmes A."/>
            <person name="Harkins R."/>
            <person name="Kim K."/>
            <person name="Kruchowski S.S."/>
            <person name="Strong C.M."/>
            <person name="Grewal N."/>
            <person name="Goyea E."/>
            <person name="Hou S."/>
            <person name="Levy A."/>
            <person name="Martinka S."/>
            <person name="Mead K."/>
            <person name="McLellan M.D."/>
            <person name="Meyer R."/>
            <person name="Randall-Maher J."/>
            <person name="Tomlinson C."/>
            <person name="Dauphin-Kohlberg S."/>
            <person name="Kozlowicz-Reilly A."/>
            <person name="Shah N."/>
            <person name="Swearengen-Shahid S."/>
            <person name="Snider J."/>
            <person name="Strong J.T."/>
            <person name="Thompson J."/>
            <person name="Yoakum M."/>
            <person name="Leonard S."/>
            <person name="Pearman C."/>
            <person name="Trani L."/>
            <person name="Radionenko M."/>
            <person name="Waligorski J.E."/>
            <person name="Wang C."/>
            <person name="Rock S.M."/>
            <person name="Tin-Wollam A.-M."/>
            <person name="Maupin R."/>
            <person name="Latreille P."/>
            <person name="Wendl M.C."/>
            <person name="Yang S.-P."/>
            <person name="Pohl C."/>
            <person name="Wallis J.W."/>
            <person name="Spieth J."/>
            <person name="Bieri T.A."/>
            <person name="Berkowicz N."/>
            <person name="Nelson J.O."/>
            <person name="Osborne J."/>
            <person name="Ding L."/>
            <person name="Meyer R."/>
            <person name="Sabo A."/>
            <person name="Shotland Y."/>
            <person name="Sinha P."/>
            <person name="Wohldmann P.E."/>
            <person name="Cook L.L."/>
            <person name="Hickenbotham M.T."/>
            <person name="Eldred J."/>
            <person name="Williams D."/>
            <person name="Jones T.A."/>
            <person name="She X."/>
            <person name="Ciccarelli F.D."/>
            <person name="Izaurralde E."/>
            <person name="Taylor J."/>
            <person name="Schmutz J."/>
            <person name="Myers R.M."/>
            <person name="Cox D.R."/>
            <person name="Huang X."/>
            <person name="McPherson J.D."/>
            <person name="Mardis E.R."/>
            <person name="Clifton S.W."/>
            <person name="Warren W.C."/>
            <person name="Chinwalla A.T."/>
            <person name="Eddy S.R."/>
            <person name="Marra M.A."/>
            <person name="Ovcharenko I."/>
            <person name="Furey T.S."/>
            <person name="Miller W."/>
            <person name="Eichler E.E."/>
            <person name="Bork P."/>
            <person name="Suyama M."/>
            <person name="Torrents D."/>
            <person name="Waterston R.H."/>
            <person name="Wilson R.K."/>
        </authorList>
    </citation>
    <scope>NUCLEOTIDE SEQUENCE [LARGE SCALE GENOMIC DNA]</scope>
</reference>
<reference key="7">
    <citation type="submission" date="2005-09" db="EMBL/GenBank/DDBJ databases">
        <authorList>
            <person name="Mural R.J."/>
            <person name="Istrail S."/>
            <person name="Sutton G.G."/>
            <person name="Florea L."/>
            <person name="Halpern A.L."/>
            <person name="Mobarry C.M."/>
            <person name="Lippert R."/>
            <person name="Walenz B."/>
            <person name="Shatkay H."/>
            <person name="Dew I."/>
            <person name="Miller J.R."/>
            <person name="Flanigan M.J."/>
            <person name="Edwards N.J."/>
            <person name="Bolanos R."/>
            <person name="Fasulo D."/>
            <person name="Halldorsson B.V."/>
            <person name="Hannenhalli S."/>
            <person name="Turner R."/>
            <person name="Yooseph S."/>
            <person name="Lu F."/>
            <person name="Nusskern D.R."/>
            <person name="Shue B.C."/>
            <person name="Zheng X.H."/>
            <person name="Zhong F."/>
            <person name="Delcher A.L."/>
            <person name="Huson D.H."/>
            <person name="Kravitz S.A."/>
            <person name="Mouchard L."/>
            <person name="Reinert K."/>
            <person name="Remington K.A."/>
            <person name="Clark A.G."/>
            <person name="Waterman M.S."/>
            <person name="Eichler E.E."/>
            <person name="Adams M.D."/>
            <person name="Hunkapiller M.W."/>
            <person name="Myers E.W."/>
            <person name="Venter J.C."/>
        </authorList>
    </citation>
    <scope>NUCLEOTIDE SEQUENCE [LARGE SCALE GENOMIC DNA]</scope>
    <scope>VARIANT SER-78</scope>
</reference>
<reference key="8">
    <citation type="journal article" date="2004" name="Genome Res.">
        <title>The status, quality, and expansion of the NIH full-length cDNA project: the Mammalian Gene Collection (MGC).</title>
        <authorList>
            <consortium name="The MGC Project Team"/>
        </authorList>
    </citation>
    <scope>NUCLEOTIDE SEQUENCE [LARGE SCALE MRNA] (ISOFORM 1)</scope>
    <source>
        <tissue>Placenta</tissue>
    </source>
</reference>
<reference key="9">
    <citation type="journal article" date="2003" name="J. Biol. Chem.">
        <title>The ORC1 cycle in human cells: II. Dynamic changes in the human ORC complex during the cell cycle.</title>
        <authorList>
            <person name="Ohta S."/>
            <person name="Tatsumi Y."/>
            <person name="Fujita M."/>
            <person name="Tsurimoto T."/>
            <person name="Obuse C."/>
        </authorList>
    </citation>
    <scope>IDENTIFICATION IN THE ORC COMPLEX</scope>
    <scope>IDENTIFICATION BY MASS SPECTROMETRY</scope>
    <scope>ASSEMBLY OF THE ORC COMPLEX</scope>
</reference>
<reference key="10">
    <citation type="journal article" date="2007" name="J. Biol. Chem.">
        <title>ATP-dependent assembly of the human origin recognition complex.</title>
        <authorList>
            <person name="Siddiqui K."/>
            <person name="Stillman B."/>
        </authorList>
    </citation>
    <scope>RECONSTITUTION OF THE ORC COMPLEX</scope>
    <scope>DISASSEMBLY OF THE ORC COMPLEX</scope>
    <scope>MUTAGENESIS OF LYS-73 AND 159-ASP-GLU-160</scope>
</reference>
<reference key="11">
    <citation type="journal article" date="2010" name="Sci. Signal.">
        <title>Quantitative phosphoproteomics reveals widespread full phosphorylation site occupancy during mitosis.</title>
        <authorList>
            <person name="Olsen J.V."/>
            <person name="Vermeulen M."/>
            <person name="Santamaria A."/>
            <person name="Kumar C."/>
            <person name="Miller M.L."/>
            <person name="Jensen L.J."/>
            <person name="Gnad F."/>
            <person name="Cox J."/>
            <person name="Jensen T.S."/>
            <person name="Nigg E.A."/>
            <person name="Brunak S."/>
            <person name="Mann M."/>
        </authorList>
    </citation>
    <scope>IDENTIFICATION BY MASS SPECTROMETRY [LARGE SCALE ANALYSIS]</scope>
    <source>
        <tissue>Cervix carcinoma</tissue>
    </source>
</reference>
<reference key="12">
    <citation type="journal article" date="2011" name="BMC Syst. Biol.">
        <title>Initial characterization of the human central proteome.</title>
        <authorList>
            <person name="Burkard T.R."/>
            <person name="Planyavsky M."/>
            <person name="Kaupe I."/>
            <person name="Breitwieser F.P."/>
            <person name="Buerckstuemmer T."/>
            <person name="Bennett K.L."/>
            <person name="Superti-Furga G."/>
            <person name="Colinge J."/>
        </authorList>
    </citation>
    <scope>IDENTIFICATION BY MASS SPECTROMETRY [LARGE SCALE ANALYSIS]</scope>
</reference>
<reference key="13">
    <citation type="journal article" date="2012" name="J. Biol. Chem.">
        <title>Leucine-rich repeat and WD repeat-containing protein 1 is recruited to pericentric heterochromatin by trimethylated lysine 9 of histone H3 and maintains heterochromatin silencing.</title>
        <authorList>
            <person name="Chan K.M."/>
            <person name="Zhang Z."/>
        </authorList>
    </citation>
    <scope>FUNCTION</scope>
    <scope>BINDING TO HISTONE H3 AND H4 TRIMETHYLATION MARKS</scope>
</reference>
<reference key="14">
    <citation type="journal article" date="2014" name="Mol. Cell. Proteomics">
        <title>Immunoaffinity enrichment and mass spectrometry analysis of protein methylation.</title>
        <authorList>
            <person name="Guo A."/>
            <person name="Gu H."/>
            <person name="Zhou J."/>
            <person name="Mulhern D."/>
            <person name="Wang Y."/>
            <person name="Lee K.A."/>
            <person name="Yang V."/>
            <person name="Aguiar M."/>
            <person name="Kornhauser J."/>
            <person name="Jia X."/>
            <person name="Ren J."/>
            <person name="Beausoleil S.A."/>
            <person name="Silva J.C."/>
            <person name="Vemulapalli V."/>
            <person name="Bedford M.T."/>
            <person name="Comb M.J."/>
        </authorList>
    </citation>
    <scope>METHYLATION [LARGE SCALE ANALYSIS] AT LYS-7</scope>
    <scope>IDENTIFICATION BY MASS SPECTROMETRY [LARGE SCALE ANALYSIS]</scope>
    <source>
        <tissue>Colon carcinoma</tissue>
    </source>
</reference>
<reference key="15">
    <citation type="journal article" date="2014" name="Nat. Commun.">
        <title>A role for DNA polymerase theta in the timing of DNA replication.</title>
        <authorList>
            <person name="Fernandez-Vidal A."/>
            <person name="Guitton-Sert L."/>
            <person name="Cadoret J.C."/>
            <person name="Drac M."/>
            <person name="Schwob E."/>
            <person name="Baldacci G."/>
            <person name="Cazaux C."/>
            <person name="Hoffmann J.S."/>
        </authorList>
    </citation>
    <scope>INTERACTION WITH POLQ</scope>
</reference>
<reference key="16">
    <citation type="journal article" date="2011" name="Nat. Genet.">
        <title>Mutations in the pre-replication complex cause Meier-Gorlin syndrome.</title>
        <authorList>
            <person name="Bicknell L.S."/>
            <person name="Bongers E.M."/>
            <person name="Leitch A."/>
            <person name="Brown S."/>
            <person name="Schoots J."/>
            <person name="Harley M.E."/>
            <person name="Aftimos S."/>
            <person name="Al-Aama J.Y."/>
            <person name="Bober M."/>
            <person name="Brown P.A."/>
            <person name="van Bokhoven H."/>
            <person name="Dean J."/>
            <person name="Edrees A.Y."/>
            <person name="Feingold M."/>
            <person name="Fryer A."/>
            <person name="Hoefsloot L.H."/>
            <person name="Kau N."/>
            <person name="Knoers N.V."/>
            <person name="Mackenzie J."/>
            <person name="Opitz J.M."/>
            <person name="Sarda P."/>
            <person name="Ross A."/>
            <person name="Temple I.K."/>
            <person name="Toutain A."/>
            <person name="Wise C.A."/>
            <person name="Wright M."/>
            <person name="Jackson A.P."/>
        </authorList>
    </citation>
    <scope>VARIANT MGORS2 CYS-174</scope>
</reference>
<reference key="17">
    <citation type="journal article" date="2011" name="Nat. Genet.">
        <title>Mutations in origin recognition complex gene ORC4 cause Meier-Gorlin syndrome.</title>
        <authorList>
            <person name="Guernsey D.L."/>
            <person name="Matsuoka M."/>
            <person name="Jiang H."/>
            <person name="Evans S."/>
            <person name="Macgillivray C."/>
            <person name="Nightingale M."/>
            <person name="Perry S."/>
            <person name="Ferguson M."/>
            <person name="LeBlanc M."/>
            <person name="Paquette J."/>
            <person name="Patry L."/>
            <person name="Rideout A.L."/>
            <person name="Thomas A."/>
            <person name="Orr A."/>
            <person name="McMaster C.R."/>
            <person name="Michaud J.L."/>
            <person name="Deal C."/>
            <person name="Langlois S."/>
            <person name="Superneau D.W."/>
            <person name="Parkash S."/>
            <person name="Ludman M."/>
            <person name="Skidmore D.L."/>
            <person name="Samuels M.E."/>
        </authorList>
    </citation>
    <scope>VARIANT MGORS2 CYS-174</scope>
</reference>
<organism>
    <name type="scientific">Homo sapiens</name>
    <name type="common">Human</name>
    <dbReference type="NCBI Taxonomy" id="9606"/>
    <lineage>
        <taxon>Eukaryota</taxon>
        <taxon>Metazoa</taxon>
        <taxon>Chordata</taxon>
        <taxon>Craniata</taxon>
        <taxon>Vertebrata</taxon>
        <taxon>Euteleostomi</taxon>
        <taxon>Mammalia</taxon>
        <taxon>Eutheria</taxon>
        <taxon>Euarchontoglires</taxon>
        <taxon>Primates</taxon>
        <taxon>Haplorrhini</taxon>
        <taxon>Catarrhini</taxon>
        <taxon>Hominidae</taxon>
        <taxon>Homo</taxon>
    </lineage>
</organism>
<protein>
    <recommendedName>
        <fullName>Origin recognition complex subunit 4</fullName>
    </recommendedName>
</protein>
<comment type="function">
    <text evidence="7">Component of the origin recognition complex (ORC) that binds origins of replication. DNA-binding is ATP-dependent. The specific DNA sequences that define origins of replication have not been identified yet. ORC is required to assemble the pre-replication complex necessary to initiate DNA replication. Binds histone H3 and H4 trimethylation marks H3K9me3, H3K27me3 and H4K20me3.</text>
</comment>
<comment type="subunit">
    <text evidence="1 3 4 8">Component of ORC, a complex composed of at least 6 subunits: ORC1, ORC2, ORC3, ORC4, ORC5 and ORC6. ORC is regulated in a cell-cycle dependent manner. It is sequentially assembled at the exit from anaphase of mitosis and disassembled as cells enter S phase (PubMed:12909626, PubMed:17716973). Interacts with DBF4 (By similarity). Interacts with POLQ (PubMed:24989122).</text>
</comment>
<comment type="interaction">
    <interactant intactId="EBI-374889">
        <id>O43929</id>
    </interactant>
    <interactant intactId="EBI-12508070">
        <id>Q8IV20</id>
        <label>LACC1</label>
    </interactant>
    <organismsDiffer>false</organismsDiffer>
    <experiments>2</experiments>
</comment>
<comment type="interaction">
    <interactant intactId="EBI-374889">
        <id>O43929</id>
    </interactant>
    <interactant intactId="EBI-374957">
        <id>Q13416</id>
        <label>ORC2</label>
    </interactant>
    <organismsDiffer>false</organismsDiffer>
    <experiments>12</experiments>
</comment>
<comment type="interaction">
    <interactant intactId="EBI-374889">
        <id>O43929</id>
    </interactant>
    <interactant intactId="EBI-374916">
        <id>Q9UBD5</id>
        <label>ORC3</label>
    </interactant>
    <organismsDiffer>false</organismsDiffer>
    <experiments>12</experiments>
</comment>
<comment type="interaction">
    <interactant intactId="EBI-374889">
        <id>O43929</id>
    </interactant>
    <interactant intactId="EBI-374928">
        <id>O43913</id>
        <label>ORC5</label>
    </interactant>
    <organismsDiffer>false</organismsDiffer>
    <experiments>2</experiments>
</comment>
<comment type="interaction">
    <interactant intactId="EBI-374889">
        <id>O43929</id>
    </interactant>
    <interactant intactId="EBI-374840">
        <id>Q9Y5N6</id>
        <label>ORC6</label>
    </interactant>
    <organismsDiffer>false</organismsDiffer>
    <experiments>2</experiments>
</comment>
<comment type="interaction">
    <interactant intactId="EBI-374889">
        <id>O43929</id>
    </interactant>
    <interactant intactId="EBI-9009083">
        <id>Q7LG56</id>
        <label>RRM2B</label>
    </interactant>
    <organismsDiffer>false</organismsDiffer>
    <experiments>4</experiments>
</comment>
<comment type="interaction">
    <interactant intactId="EBI-374889">
        <id>O43929</id>
    </interactant>
    <interactant intactId="EBI-533224">
        <id>P15884</id>
        <label>TCF4</label>
    </interactant>
    <organismsDiffer>false</organismsDiffer>
    <experiments>3</experiments>
</comment>
<comment type="subcellular location">
    <subcellularLocation>
        <location>Nucleus</location>
    </subcellularLocation>
</comment>
<comment type="alternative products">
    <event type="alternative splicing"/>
    <isoform>
        <id>O43929-1</id>
        <name>1</name>
        <sequence type="displayed"/>
    </isoform>
    <isoform>
        <id>O43929-2</id>
        <name>2</name>
        <sequence type="described" ref="VSP_045199"/>
    </isoform>
    <isoform>
        <id>O43929-3</id>
        <name>3</name>
        <sequence type="described" ref="VSP_046437"/>
    </isoform>
</comment>
<comment type="disease" evidence="5 6">
    <disease id="DI-03044">
        <name>Meier-Gorlin syndrome 2</name>
        <acronym>MGORS2</acronym>
        <description>A syndrome characterized by bilateral microtia, aplasia/hypoplasia of the patellae, and severe intrauterine and postnatal growth retardation with short stature and poor weight gain. Additional clinical findings include anomalies of cranial sutures, microcephaly, apparently low-set and simple ears, microstomia, full lips, highly arched or cleft palate, micrognathia, genitourinary tract anomalies, and various skeletal anomalies. While almost all cases have primordial dwarfism with substantial prenatal and postnatal growth retardation, not all cases have microcephaly, and microtia and absent/hypoplastic patella are absent in some. Despite the presence of microcephaly, intellect is usually normal.</description>
        <dbReference type="MIM" id="613800"/>
    </disease>
    <text>The disease is caused by variants affecting the gene represented in this entry.</text>
</comment>
<comment type="similarity">
    <text evidence="15">Belongs to the ORC4 family.</text>
</comment>
<accession>O43929</accession>
<accession>B7Z3D0</accession>
<accession>B7Z5F1</accession>
<accession>D3DP86</accession>
<accession>F5H069</accession>
<accession>Q96C42</accession>
<gene>
    <name type="primary">ORC4</name>
    <name type="synonym">ORC4L</name>
</gene>
<proteinExistence type="evidence at protein level"/>
<evidence type="ECO:0000250" key="1">
    <source>
        <dbReference type="UniProtKB" id="O88708"/>
    </source>
</evidence>
<evidence type="ECO:0000255" key="2"/>
<evidence type="ECO:0000269" key="3">
    <source>
    </source>
</evidence>
<evidence type="ECO:0000269" key="4">
    <source>
    </source>
</evidence>
<evidence type="ECO:0000269" key="5">
    <source>
    </source>
</evidence>
<evidence type="ECO:0000269" key="6">
    <source>
    </source>
</evidence>
<evidence type="ECO:0000269" key="7">
    <source>
    </source>
</evidence>
<evidence type="ECO:0000269" key="8">
    <source>
    </source>
</evidence>
<evidence type="ECO:0000269" key="9">
    <source>
    </source>
</evidence>
<evidence type="ECO:0000269" key="10">
    <source ref="2"/>
</evidence>
<evidence type="ECO:0000269" key="11">
    <source ref="3"/>
</evidence>
<evidence type="ECO:0000269" key="12">
    <source ref="4"/>
</evidence>
<evidence type="ECO:0000269" key="13">
    <source ref="7"/>
</evidence>
<evidence type="ECO:0000303" key="14">
    <source>
    </source>
</evidence>
<evidence type="ECO:0000305" key="15"/>
<evidence type="ECO:0007744" key="16">
    <source>
    </source>
</evidence>
<evidence type="ECO:0007829" key="17">
    <source>
        <dbReference type="PDB" id="5UJ7"/>
    </source>
</evidence>
<evidence type="ECO:0007829" key="18">
    <source>
        <dbReference type="PDB" id="7JPO"/>
    </source>
</evidence>
<name>ORC4_HUMAN</name>
<keyword id="KW-0002">3D-structure</keyword>
<keyword id="KW-0025">Alternative splicing</keyword>
<keyword id="KW-0067">ATP-binding</keyword>
<keyword id="KW-0225">Disease variant</keyword>
<keyword id="KW-0235">DNA replication</keyword>
<keyword id="KW-0238">DNA-binding</keyword>
<keyword id="KW-0242">Dwarfism</keyword>
<keyword id="KW-0488">Methylation</keyword>
<keyword id="KW-0547">Nucleotide-binding</keyword>
<keyword id="KW-0539">Nucleus</keyword>
<keyword id="KW-1267">Proteomics identification</keyword>
<keyword id="KW-1185">Reference proteome</keyword>
<feature type="chain" id="PRO_0000127087" description="Origin recognition complex subunit 4">
    <location>
        <begin position="1"/>
        <end position="436"/>
    </location>
</feature>
<feature type="binding site" evidence="2">
    <location>
        <begin position="67"/>
        <end position="74"/>
    </location>
    <ligand>
        <name>ATP</name>
        <dbReference type="ChEBI" id="CHEBI:30616"/>
    </ligand>
</feature>
<feature type="modified residue" description="N6-methyllysine" evidence="16">
    <location>
        <position position="7"/>
    </location>
</feature>
<feature type="splice variant" id="VSP_045199" description="In isoform 2." evidence="14">
    <location>
        <begin position="1"/>
        <end position="84"/>
    </location>
</feature>
<feature type="splice variant" id="VSP_046437" description="In isoform 3." evidence="14">
    <location>
        <begin position="1"/>
        <end position="74"/>
    </location>
</feature>
<feature type="sequence variant" id="VAR_014523" description="In dbSNP:rs2307397." evidence="12">
    <original>L</original>
    <variation>V</variation>
    <location>
        <position position="56"/>
    </location>
</feature>
<feature type="sequence variant" id="VAR_019235" description="In dbSNP:rs2307394." evidence="9 10 11 13">
    <original>N</original>
    <variation>S</variation>
    <location>
        <position position="78"/>
    </location>
</feature>
<feature type="sequence variant" id="VAR_065486" description="In MGORS2; dbSNP:rs387906847." evidence="5 6">
    <original>Y</original>
    <variation>C</variation>
    <location>
        <position position="174"/>
    </location>
</feature>
<feature type="mutagenesis site" description="Impairs ORC complex formation." evidence="4">
    <original>K</original>
    <variation>A</variation>
    <variation>E</variation>
    <location>
        <position position="73"/>
    </location>
</feature>
<feature type="mutagenesis site" description="Impairs ORC complex formation." evidence="4">
    <original>DE</original>
    <variation>AA</variation>
    <location>
        <begin position="159"/>
        <end position="160"/>
    </location>
</feature>
<feature type="sequence conflict" description="In Ref. 5; BAH12887." evidence="15" ref="5">
    <original>N</original>
    <variation>S</variation>
    <location>
        <position position="135"/>
    </location>
</feature>
<feature type="helix" evidence="18">
    <location>
        <begin position="18"/>
        <end position="28"/>
    </location>
</feature>
<feature type="turn" evidence="18">
    <location>
        <begin position="29"/>
        <end position="31"/>
    </location>
</feature>
<feature type="helix" evidence="18">
    <location>
        <begin position="41"/>
        <end position="56"/>
    </location>
</feature>
<feature type="strand" evidence="18">
    <location>
        <begin position="61"/>
        <end position="66"/>
    </location>
</feature>
<feature type="helix" evidence="18">
    <location>
        <begin position="73"/>
        <end position="86"/>
    </location>
</feature>
<feature type="helix" evidence="18">
    <location>
        <begin position="88"/>
        <end position="92"/>
    </location>
</feature>
<feature type="strand" evidence="18">
    <location>
        <begin position="95"/>
        <end position="100"/>
    </location>
</feature>
<feature type="turn" evidence="18">
    <location>
        <begin position="101"/>
        <end position="103"/>
    </location>
</feature>
<feature type="helix" evidence="18">
    <location>
        <begin position="107"/>
        <end position="117"/>
    </location>
</feature>
<feature type="helix" evidence="18">
    <location>
        <begin position="121"/>
        <end position="124"/>
    </location>
</feature>
<feature type="helix" evidence="18">
    <location>
        <begin position="132"/>
        <end position="140"/>
    </location>
</feature>
<feature type="strand" evidence="18">
    <location>
        <begin position="154"/>
        <end position="160"/>
    </location>
</feature>
<feature type="helix" evidence="18">
    <location>
        <begin position="161"/>
        <end position="163"/>
    </location>
</feature>
<feature type="strand" evidence="18">
    <location>
        <begin position="166"/>
        <end position="169"/>
    </location>
</feature>
<feature type="helix" evidence="18">
    <location>
        <begin position="171"/>
        <end position="182"/>
    </location>
</feature>
<feature type="strand" evidence="18">
    <location>
        <begin position="183"/>
        <end position="185"/>
    </location>
</feature>
<feature type="strand" evidence="18">
    <location>
        <begin position="187"/>
        <end position="193"/>
    </location>
</feature>
<feature type="helix" evidence="18">
    <location>
        <begin position="198"/>
        <end position="200"/>
    </location>
</feature>
<feature type="helix" evidence="18">
    <location>
        <begin position="204"/>
        <end position="209"/>
    </location>
</feature>
<feature type="strand" evidence="18">
    <location>
        <begin position="214"/>
        <end position="216"/>
    </location>
</feature>
<feature type="helix" evidence="18">
    <location>
        <begin position="223"/>
        <end position="233"/>
    </location>
</feature>
<feature type="helix" evidence="18">
    <location>
        <begin position="243"/>
        <end position="257"/>
    </location>
</feature>
<feature type="helix" evidence="18">
    <location>
        <begin position="260"/>
        <end position="272"/>
    </location>
</feature>
<feature type="helix" evidence="18">
    <location>
        <begin position="276"/>
        <end position="287"/>
    </location>
</feature>
<feature type="helix" evidence="18">
    <location>
        <begin position="299"/>
        <end position="309"/>
    </location>
</feature>
<feature type="helix" evidence="18">
    <location>
        <begin position="313"/>
        <end position="319"/>
    </location>
</feature>
<feature type="helix" evidence="18">
    <location>
        <begin position="323"/>
        <end position="338"/>
    </location>
</feature>
<feature type="helix" evidence="18">
    <location>
        <begin position="346"/>
        <end position="359"/>
    </location>
</feature>
<feature type="strand" evidence="17">
    <location>
        <begin position="360"/>
        <end position="362"/>
    </location>
</feature>
<feature type="helix" evidence="18">
    <location>
        <begin position="369"/>
        <end position="381"/>
    </location>
</feature>
<feature type="strand" evidence="18">
    <location>
        <begin position="384"/>
        <end position="389"/>
    </location>
</feature>
<feature type="turn" evidence="18">
    <location>
        <begin position="392"/>
        <end position="394"/>
    </location>
</feature>
<feature type="strand" evidence="18">
    <location>
        <begin position="397"/>
        <end position="399"/>
    </location>
</feature>
<feature type="strand" evidence="18">
    <location>
        <begin position="402"/>
        <end position="404"/>
    </location>
</feature>
<feature type="helix" evidence="18">
    <location>
        <begin position="408"/>
        <end position="416"/>
    </location>
</feature>
<feature type="helix" evidence="18">
    <location>
        <begin position="423"/>
        <end position="430"/>
    </location>
</feature>
<dbReference type="EMBL" id="AF022108">
    <property type="protein sequence ID" value="AAC01957.1"/>
    <property type="molecule type" value="mRNA"/>
</dbReference>
<dbReference type="EMBL" id="AF047598">
    <property type="protein sequence ID" value="AAC80282.1"/>
    <property type="molecule type" value="mRNA"/>
</dbReference>
<dbReference type="EMBL" id="AF132596">
    <property type="protein sequence ID" value="AAD22110.1"/>
    <property type="molecule type" value="mRNA"/>
</dbReference>
<dbReference type="EMBL" id="AY600302">
    <property type="protein sequence ID" value="AAS94326.1"/>
    <property type="molecule type" value="Genomic_DNA"/>
</dbReference>
<dbReference type="EMBL" id="AK295721">
    <property type="protein sequence ID" value="BAH12166.1"/>
    <property type="molecule type" value="mRNA"/>
</dbReference>
<dbReference type="EMBL" id="AK298862">
    <property type="protein sequence ID" value="BAH12887.1"/>
    <property type="molecule type" value="mRNA"/>
</dbReference>
<dbReference type="EMBL" id="AC009480">
    <property type="status" value="NOT_ANNOTATED_CDS"/>
    <property type="molecule type" value="Genomic_DNA"/>
</dbReference>
<dbReference type="EMBL" id="AC019226">
    <property type="status" value="NOT_ANNOTATED_CDS"/>
    <property type="molecule type" value="Genomic_DNA"/>
</dbReference>
<dbReference type="EMBL" id="CH471058">
    <property type="protein sequence ID" value="EAX11555.1"/>
    <property type="molecule type" value="Genomic_DNA"/>
</dbReference>
<dbReference type="EMBL" id="CH471058">
    <property type="protein sequence ID" value="EAX11556.1"/>
    <property type="molecule type" value="Genomic_DNA"/>
</dbReference>
<dbReference type="EMBL" id="CH471058">
    <property type="protein sequence ID" value="EAX11557.1"/>
    <property type="molecule type" value="Genomic_DNA"/>
</dbReference>
<dbReference type="EMBL" id="CH471058">
    <property type="protein sequence ID" value="EAX11558.1"/>
    <property type="molecule type" value="Genomic_DNA"/>
</dbReference>
<dbReference type="EMBL" id="BC014847">
    <property type="protein sequence ID" value="AAH14847.1"/>
    <property type="molecule type" value="mRNA"/>
</dbReference>
<dbReference type="CCDS" id="CCDS2187.1">
    <molecule id="O43929-1"/>
</dbReference>
<dbReference type="CCDS" id="CCDS54404.1">
    <molecule id="O43929-2"/>
</dbReference>
<dbReference type="CCDS" id="CCDS54405.1">
    <molecule id="O43929-3"/>
</dbReference>
<dbReference type="RefSeq" id="NP_001177808.1">
    <molecule id="O43929-1"/>
    <property type="nucleotide sequence ID" value="NM_001190879.3"/>
</dbReference>
<dbReference type="RefSeq" id="NP_001177810.1">
    <molecule id="O43929-2"/>
    <property type="nucleotide sequence ID" value="NM_001190881.3"/>
</dbReference>
<dbReference type="RefSeq" id="NP_001177811.1">
    <molecule id="O43929-3"/>
    <property type="nucleotide sequence ID" value="NM_001190882.3"/>
</dbReference>
<dbReference type="RefSeq" id="NP_001361199.1">
    <molecule id="O43929-1"/>
    <property type="nucleotide sequence ID" value="NM_001374270.1"/>
</dbReference>
<dbReference type="RefSeq" id="NP_001361201.1">
    <molecule id="O43929-2"/>
    <property type="nucleotide sequence ID" value="NM_001374272.1"/>
</dbReference>
<dbReference type="RefSeq" id="NP_002543.2">
    <molecule id="O43929-1"/>
    <property type="nucleotide sequence ID" value="NM_002552.4"/>
</dbReference>
<dbReference type="RefSeq" id="NP_859525.1">
    <molecule id="O43929-1"/>
    <property type="nucleotide sequence ID" value="NM_181741.4"/>
</dbReference>
<dbReference type="RefSeq" id="NP_859526.1">
    <molecule id="O43929-1"/>
    <property type="nucleotide sequence ID" value="NM_181742.4"/>
</dbReference>
<dbReference type="RefSeq" id="XP_011509557.1">
    <molecule id="O43929-1"/>
    <property type="nucleotide sequence ID" value="XM_011511255.3"/>
</dbReference>
<dbReference type="RefSeq" id="XP_016859715.1">
    <property type="nucleotide sequence ID" value="XM_017004226.1"/>
</dbReference>
<dbReference type="RefSeq" id="XP_016859716.1">
    <property type="nucleotide sequence ID" value="XM_017004227.1"/>
</dbReference>
<dbReference type="RefSeq" id="XP_054198286.1">
    <molecule id="O43929-1"/>
    <property type="nucleotide sequence ID" value="XM_054342311.1"/>
</dbReference>
<dbReference type="PDB" id="5UJ7">
    <property type="method" value="X-ray"/>
    <property type="resolution" value="3.39 A"/>
    <property type="chains" value="C/D=1-436"/>
</dbReference>
<dbReference type="PDB" id="5UJM">
    <property type="method" value="EM"/>
    <property type="resolution" value="18.00 A"/>
    <property type="chains" value="D=1-436"/>
</dbReference>
<dbReference type="PDB" id="7CTE">
    <property type="method" value="EM"/>
    <property type="resolution" value="3.80 A"/>
    <property type="chains" value="D=1-436"/>
</dbReference>
<dbReference type="PDB" id="7CTF">
    <property type="method" value="EM"/>
    <property type="resolution" value="4.80 A"/>
    <property type="chains" value="D=1-436"/>
</dbReference>
<dbReference type="PDB" id="7CTG">
    <property type="method" value="EM"/>
    <property type="resolution" value="5.00 A"/>
    <property type="chains" value="D=1-436"/>
</dbReference>
<dbReference type="PDB" id="7JPO">
    <property type="method" value="EM"/>
    <property type="resolution" value="3.20 A"/>
    <property type="chains" value="D=1-436"/>
</dbReference>
<dbReference type="PDB" id="7JPP">
    <property type="method" value="EM"/>
    <property type="resolution" value="3.70 A"/>
    <property type="chains" value="D=1-436"/>
</dbReference>
<dbReference type="PDB" id="7JPQ">
    <property type="method" value="EM"/>
    <property type="resolution" value="3.50 A"/>
    <property type="chains" value="D=1-436"/>
</dbReference>
<dbReference type="PDB" id="7JPR">
    <property type="method" value="EM"/>
    <property type="resolution" value="4.00 A"/>
    <property type="chains" value="D=1-436"/>
</dbReference>
<dbReference type="PDB" id="7JPS">
    <property type="method" value="EM"/>
    <property type="resolution" value="4.40 A"/>
    <property type="chains" value="D=1-436"/>
</dbReference>
<dbReference type="PDB" id="8RWV">
    <property type="method" value="EM"/>
    <property type="resolution" value="6.68 A"/>
    <property type="chains" value="D=1-436"/>
</dbReference>
<dbReference type="PDB" id="8S0C">
    <property type="method" value="EM"/>
    <property type="resolution" value="4.00 A"/>
    <property type="chains" value="D=1-436"/>
</dbReference>
<dbReference type="PDB" id="8S0D">
    <property type="method" value="EM"/>
    <property type="resolution" value="3.60 A"/>
    <property type="chains" value="D=1-436"/>
</dbReference>
<dbReference type="PDB" id="8S0E">
    <property type="method" value="EM"/>
    <property type="resolution" value="3.80 A"/>
    <property type="chains" value="D=1-436"/>
</dbReference>
<dbReference type="PDB" id="8S0F">
    <property type="method" value="EM"/>
    <property type="resolution" value="4.10 A"/>
    <property type="chains" value="D=1-436"/>
</dbReference>
<dbReference type="PDBsum" id="5UJ7"/>
<dbReference type="PDBsum" id="5UJM"/>
<dbReference type="PDBsum" id="7CTE"/>
<dbReference type="PDBsum" id="7CTF"/>
<dbReference type="PDBsum" id="7CTG"/>
<dbReference type="PDBsum" id="7JPO"/>
<dbReference type="PDBsum" id="7JPP"/>
<dbReference type="PDBsum" id="7JPQ"/>
<dbReference type="PDBsum" id="7JPR"/>
<dbReference type="PDBsum" id="7JPS"/>
<dbReference type="PDBsum" id="8RWV"/>
<dbReference type="PDBsum" id="8S0C"/>
<dbReference type="PDBsum" id="8S0D"/>
<dbReference type="PDBsum" id="8S0E"/>
<dbReference type="PDBsum" id="8S0F"/>
<dbReference type="EMDB" id="EMD-19566"/>
<dbReference type="EMDB" id="EMD-19621"/>
<dbReference type="EMDB" id="EMD-19622"/>
<dbReference type="EMDB" id="EMD-19623"/>
<dbReference type="EMDB" id="EMD-19624"/>
<dbReference type="EMDB" id="EMD-22417"/>
<dbReference type="EMDB" id="EMD-22418"/>
<dbReference type="EMDB" id="EMD-22419"/>
<dbReference type="EMDB" id="EMD-22420"/>
<dbReference type="EMDB" id="EMD-22421"/>
<dbReference type="EMDB" id="EMD-30462"/>
<dbReference type="EMDB" id="EMD-30463"/>
<dbReference type="EMDB" id="EMD-30464"/>
<dbReference type="SMR" id="O43929"/>
<dbReference type="BioGRID" id="111042">
    <property type="interactions" value="155"/>
</dbReference>
<dbReference type="ComplexPortal" id="CPX-1880">
    <property type="entry name" value="Nuclear origin recognition complex"/>
</dbReference>
<dbReference type="CORUM" id="O43929"/>
<dbReference type="DIP" id="DIP-29690N"/>
<dbReference type="FunCoup" id="O43929">
    <property type="interactions" value="3758"/>
</dbReference>
<dbReference type="IntAct" id="O43929">
    <property type="interactions" value="75"/>
</dbReference>
<dbReference type="MINT" id="O43929"/>
<dbReference type="STRING" id="9606.ENSP00000441953"/>
<dbReference type="iPTMnet" id="O43929"/>
<dbReference type="PhosphoSitePlus" id="O43929"/>
<dbReference type="SwissPalm" id="O43929"/>
<dbReference type="BioMuta" id="ORC4"/>
<dbReference type="jPOST" id="O43929"/>
<dbReference type="MassIVE" id="O43929"/>
<dbReference type="PaxDb" id="9606-ENSP00000441953"/>
<dbReference type="PeptideAtlas" id="O43929"/>
<dbReference type="ProteomicsDB" id="25248"/>
<dbReference type="ProteomicsDB" id="49241">
    <molecule id="O43929-1"/>
</dbReference>
<dbReference type="ProteomicsDB" id="6510"/>
<dbReference type="Pumba" id="O43929"/>
<dbReference type="Antibodypedia" id="4189">
    <property type="antibodies" value="242 antibodies from 32 providers"/>
</dbReference>
<dbReference type="DNASU" id="5000"/>
<dbReference type="Ensembl" id="ENST00000264169.6">
    <molecule id="O43929-1"/>
    <property type="protein sequence ID" value="ENSP00000264169.2"/>
    <property type="gene ID" value="ENSG00000115947.14"/>
</dbReference>
<dbReference type="Ensembl" id="ENST00000392857.10">
    <molecule id="O43929-1"/>
    <property type="protein sequence ID" value="ENSP00000376597.5"/>
    <property type="gene ID" value="ENSG00000115947.14"/>
</dbReference>
<dbReference type="Ensembl" id="ENST00000535373.5">
    <molecule id="O43929-1"/>
    <property type="protein sequence ID" value="ENSP00000441953.1"/>
    <property type="gene ID" value="ENSG00000115947.14"/>
</dbReference>
<dbReference type="Ensembl" id="ENST00000536575.5">
    <molecule id="O43929-2"/>
    <property type="protein sequence ID" value="ENSP00000441502.1"/>
    <property type="gene ID" value="ENSG00000115947.14"/>
</dbReference>
<dbReference type="Ensembl" id="ENST00000540442.5">
    <molecule id="O43929-3"/>
    <property type="protein sequence ID" value="ENSP00000438326.1"/>
    <property type="gene ID" value="ENSG00000115947.14"/>
</dbReference>
<dbReference type="GeneID" id="5000"/>
<dbReference type="KEGG" id="hsa:5000"/>
<dbReference type="MANE-Select" id="ENST00000392857.10">
    <property type="protein sequence ID" value="ENSP00000376597.5"/>
    <property type="RefSeq nucleotide sequence ID" value="NM_181741.4"/>
    <property type="RefSeq protein sequence ID" value="NP_859525.1"/>
</dbReference>
<dbReference type="UCSC" id="uc002twi.4">
    <molecule id="O43929-1"/>
    <property type="organism name" value="human"/>
</dbReference>
<dbReference type="AGR" id="HGNC:8490"/>
<dbReference type="CTD" id="5000"/>
<dbReference type="DisGeNET" id="5000"/>
<dbReference type="GeneCards" id="ORC4"/>
<dbReference type="HGNC" id="HGNC:8490">
    <property type="gene designation" value="ORC4"/>
</dbReference>
<dbReference type="HPA" id="ENSG00000115947">
    <property type="expression patterns" value="Low tissue specificity"/>
</dbReference>
<dbReference type="MalaCards" id="ORC4"/>
<dbReference type="MIM" id="603056">
    <property type="type" value="gene"/>
</dbReference>
<dbReference type="MIM" id="613800">
    <property type="type" value="phenotype"/>
</dbReference>
<dbReference type="neXtProt" id="NX_O43929"/>
<dbReference type="OpenTargets" id="ENSG00000115947"/>
<dbReference type="Orphanet" id="2554">
    <property type="disease" value="Ear-patella-short stature syndrome"/>
</dbReference>
<dbReference type="PharmGKB" id="PA32811"/>
<dbReference type="VEuPathDB" id="HostDB:ENSG00000115947"/>
<dbReference type="eggNOG" id="KOG2228">
    <property type="taxonomic scope" value="Eukaryota"/>
</dbReference>
<dbReference type="GeneTree" id="ENSGT00390000016542"/>
<dbReference type="HOGENOM" id="CLU_007115_0_1_1"/>
<dbReference type="InParanoid" id="O43929"/>
<dbReference type="OMA" id="AFTFQRN"/>
<dbReference type="OrthoDB" id="343623at2759"/>
<dbReference type="PAN-GO" id="O43929">
    <property type="GO annotations" value="3 GO annotations based on evolutionary models"/>
</dbReference>
<dbReference type="PhylomeDB" id="O43929"/>
<dbReference type="TreeFam" id="TF101094"/>
<dbReference type="BRENDA" id="3.6.4.B8">
    <property type="organism ID" value="2681"/>
</dbReference>
<dbReference type="PathwayCommons" id="O43929"/>
<dbReference type="Reactome" id="R-HSA-113507">
    <property type="pathway name" value="E2F-enabled inhibition of pre-replication complex formation"/>
</dbReference>
<dbReference type="Reactome" id="R-HSA-176187">
    <property type="pathway name" value="Activation of ATR in response to replication stress"/>
</dbReference>
<dbReference type="Reactome" id="R-HSA-68616">
    <property type="pathway name" value="Assembly of the ORC complex at the origin of replication"/>
</dbReference>
<dbReference type="Reactome" id="R-HSA-68689">
    <property type="pathway name" value="CDC6 association with the ORC:origin complex"/>
</dbReference>
<dbReference type="Reactome" id="R-HSA-68867">
    <property type="pathway name" value="Assembly of the pre-replicative complex"/>
</dbReference>
<dbReference type="Reactome" id="R-HSA-68949">
    <property type="pathway name" value="Orc1 removal from chromatin"/>
</dbReference>
<dbReference type="Reactome" id="R-HSA-68962">
    <property type="pathway name" value="Activation of the pre-replicative complex"/>
</dbReference>
<dbReference type="SignaLink" id="O43929"/>
<dbReference type="SIGNOR" id="O43929"/>
<dbReference type="BioGRID-ORCS" id="5000">
    <property type="hits" value="446 hits in 1137 CRISPR screens"/>
</dbReference>
<dbReference type="ChiTaRS" id="ORC4">
    <property type="organism name" value="human"/>
</dbReference>
<dbReference type="GeneWiki" id="ORC4"/>
<dbReference type="GeneWiki" id="ORC4L"/>
<dbReference type="GenomeRNAi" id="5000"/>
<dbReference type="Pharos" id="O43929">
    <property type="development level" value="Tbio"/>
</dbReference>
<dbReference type="PRO" id="PR:O43929"/>
<dbReference type="Proteomes" id="UP000005640">
    <property type="component" value="Chromosome 2"/>
</dbReference>
<dbReference type="RNAct" id="O43929">
    <property type="molecule type" value="protein"/>
</dbReference>
<dbReference type="Bgee" id="ENSG00000115947">
    <property type="expression patterns" value="Expressed in calcaneal tendon and 204 other cell types or tissues"/>
</dbReference>
<dbReference type="ExpressionAtlas" id="O43929">
    <property type="expression patterns" value="baseline and differential"/>
</dbReference>
<dbReference type="GO" id="GO:0000781">
    <property type="term" value="C:chromosome, telomeric region"/>
    <property type="evidence" value="ECO:0007005"/>
    <property type="project" value="BHF-UCL"/>
</dbReference>
<dbReference type="GO" id="GO:0005829">
    <property type="term" value="C:cytosol"/>
    <property type="evidence" value="ECO:0000314"/>
    <property type="project" value="HPA"/>
</dbReference>
<dbReference type="GO" id="GO:0005664">
    <property type="term" value="C:nuclear origin of replication recognition complex"/>
    <property type="evidence" value="ECO:0000314"/>
    <property type="project" value="UniProtKB"/>
</dbReference>
<dbReference type="GO" id="GO:0005730">
    <property type="term" value="C:nucleolus"/>
    <property type="evidence" value="ECO:0000314"/>
    <property type="project" value="HPA"/>
</dbReference>
<dbReference type="GO" id="GO:0005654">
    <property type="term" value="C:nucleoplasm"/>
    <property type="evidence" value="ECO:0000314"/>
    <property type="project" value="HPA"/>
</dbReference>
<dbReference type="GO" id="GO:0005634">
    <property type="term" value="C:nucleus"/>
    <property type="evidence" value="ECO:0000314"/>
    <property type="project" value="UniProtKB"/>
</dbReference>
<dbReference type="GO" id="GO:0000808">
    <property type="term" value="C:origin recognition complex"/>
    <property type="evidence" value="ECO:0000314"/>
    <property type="project" value="UniProtKB"/>
</dbReference>
<dbReference type="GO" id="GO:0005524">
    <property type="term" value="F:ATP binding"/>
    <property type="evidence" value="ECO:0007669"/>
    <property type="project" value="UniProtKB-KW"/>
</dbReference>
<dbReference type="GO" id="GO:0016887">
    <property type="term" value="F:ATP hydrolysis activity"/>
    <property type="evidence" value="ECO:0007669"/>
    <property type="project" value="InterPro"/>
</dbReference>
<dbReference type="GO" id="GO:0003688">
    <property type="term" value="F:DNA replication origin binding"/>
    <property type="evidence" value="ECO:0000315"/>
    <property type="project" value="UniProtKB"/>
</dbReference>
<dbReference type="GO" id="GO:0000166">
    <property type="term" value="F:nucleotide binding"/>
    <property type="evidence" value="ECO:0000314"/>
    <property type="project" value="UniProtKB"/>
</dbReference>
<dbReference type="GO" id="GO:0006270">
    <property type="term" value="P:DNA replication initiation"/>
    <property type="evidence" value="ECO:0000314"/>
    <property type="project" value="ComplexPortal"/>
</dbReference>
<dbReference type="GO" id="GO:0040038">
    <property type="term" value="P:polar body extrusion after meiotic divisions"/>
    <property type="evidence" value="ECO:0007669"/>
    <property type="project" value="Ensembl"/>
</dbReference>
<dbReference type="GO" id="GO:0051258">
    <property type="term" value="P:protein polymerization"/>
    <property type="evidence" value="ECO:0007669"/>
    <property type="project" value="Ensembl"/>
</dbReference>
<dbReference type="CDD" id="cd00009">
    <property type="entry name" value="AAA"/>
    <property type="match status" value="1"/>
</dbReference>
<dbReference type="FunFam" id="3.40.50.300:FF:000649">
    <property type="entry name" value="Origin recognition complex subunit 4"/>
    <property type="match status" value="1"/>
</dbReference>
<dbReference type="Gene3D" id="3.40.50.300">
    <property type="entry name" value="P-loop containing nucleotide triphosphate hydrolases"/>
    <property type="match status" value="1"/>
</dbReference>
<dbReference type="InterPro" id="IPR003593">
    <property type="entry name" value="AAA+_ATPase"/>
</dbReference>
<dbReference type="InterPro" id="IPR041664">
    <property type="entry name" value="AAA_16"/>
</dbReference>
<dbReference type="InterPro" id="IPR016527">
    <property type="entry name" value="ORC4"/>
</dbReference>
<dbReference type="InterPro" id="IPR032705">
    <property type="entry name" value="ORC4_C"/>
</dbReference>
<dbReference type="InterPro" id="IPR027417">
    <property type="entry name" value="P-loop_NTPase"/>
</dbReference>
<dbReference type="PANTHER" id="PTHR12087">
    <property type="entry name" value="ORIGIN RECOGNITION COMPLEX SUBUNIT 4"/>
    <property type="match status" value="1"/>
</dbReference>
<dbReference type="PANTHER" id="PTHR12087:SF0">
    <property type="entry name" value="ORIGIN RECOGNITION COMPLEX SUBUNIT 4"/>
    <property type="match status" value="1"/>
</dbReference>
<dbReference type="Pfam" id="PF13191">
    <property type="entry name" value="AAA_16"/>
    <property type="match status" value="1"/>
</dbReference>
<dbReference type="Pfam" id="PF14629">
    <property type="entry name" value="ORC4_C"/>
    <property type="match status" value="1"/>
</dbReference>
<dbReference type="PIRSF" id="PIRSF007858">
    <property type="entry name" value="ORC4"/>
    <property type="match status" value="1"/>
</dbReference>
<dbReference type="SMART" id="SM00382">
    <property type="entry name" value="AAA"/>
    <property type="match status" value="1"/>
</dbReference>
<dbReference type="SUPFAM" id="SSF52540">
    <property type="entry name" value="P-loop containing nucleoside triphosphate hydrolases"/>
    <property type="match status" value="1"/>
</dbReference>